<protein>
    <recommendedName>
        <fullName evidence="1">DNA-directed RNA polymerase subunit beta</fullName>
        <shortName evidence="1">RNAP subunit beta</shortName>
        <ecNumber evidence="1">2.7.7.6</ecNumber>
    </recommendedName>
    <alternativeName>
        <fullName evidence="1">RNA polymerase subunit beta</fullName>
    </alternativeName>
    <alternativeName>
        <fullName evidence="1">Transcriptase subunit beta</fullName>
    </alternativeName>
</protein>
<name>RPOB_CLOBA</name>
<keyword id="KW-0240">DNA-directed RNA polymerase</keyword>
<keyword id="KW-0548">Nucleotidyltransferase</keyword>
<keyword id="KW-0804">Transcription</keyword>
<keyword id="KW-0808">Transferase</keyword>
<feature type="chain" id="PRO_1000141677" description="DNA-directed RNA polymerase subunit beta">
    <location>
        <begin position="1"/>
        <end position="1241"/>
    </location>
</feature>
<comment type="function">
    <text evidence="1">DNA-dependent RNA polymerase catalyzes the transcription of DNA into RNA using the four ribonucleoside triphosphates as substrates.</text>
</comment>
<comment type="catalytic activity">
    <reaction evidence="1">
        <text>RNA(n) + a ribonucleoside 5'-triphosphate = RNA(n+1) + diphosphate</text>
        <dbReference type="Rhea" id="RHEA:21248"/>
        <dbReference type="Rhea" id="RHEA-COMP:14527"/>
        <dbReference type="Rhea" id="RHEA-COMP:17342"/>
        <dbReference type="ChEBI" id="CHEBI:33019"/>
        <dbReference type="ChEBI" id="CHEBI:61557"/>
        <dbReference type="ChEBI" id="CHEBI:140395"/>
        <dbReference type="EC" id="2.7.7.6"/>
    </reaction>
</comment>
<comment type="subunit">
    <text evidence="1">The RNAP catalytic core consists of 2 alpha, 1 beta, 1 beta' and 1 omega subunit. When a sigma factor is associated with the core the holoenzyme is formed, which can initiate transcription.</text>
</comment>
<comment type="similarity">
    <text evidence="1">Belongs to the RNA polymerase beta chain family.</text>
</comment>
<sequence length="1241" mass="139570">MVHPVQVGKRTRMSFGKVKDVTEMPNLIEVQLDSYQWFLREGLHEVFDDINPITNFTGNLVLEFVDYKLDMDNIKYSVEECKERDATYAAPLKVSVRLQNNETGEIKEQEVFMGDFPLMTDQGTFIINGAERVIVSQLVRSPGVYYNYSIDKTGKKLYSATVIPNRGAWLEYETDSNDIIYVRIDKTRKLPITILARAMGFGSDQELLDFFGEDERFRASIEKDNTKTREEGLLEIYKRLRPGEPPTVDSAISLIDSLFFDAKRYDLSRVGRYKFNKKLALNLRIANQIAAMDVINPSTGEIMVEKGQKISRLLSEDIQNAGIKSVDILVDDKLVRVISNNFVDITKQVPFDVSDLQIKELVHYPTLKEILDNYSDEATIKEEIKKNLSRLIPKHIIKDDIFATISYELGLPYGIGYVDDIDHLGNRRLRSVGELLQNQFRIGLSRMERVVKERMTIQDQESITPQMLINIRPVAAAIKEFFGSSQLSQFMDQTNPLSELTHKRRLSALGPGGLSRERAGFEVRDVHHSHYGRMCPIETPEGPNIGLINSLATFARVNEYGFIETPYRIIDKENARATEEIRYFTADEEDQCLIAQAKEPLDENGYFVDKKVTVRYLEDVLVVPATDVDLMDVSARQIVSVATAMIPFLENDDASRALMGSNMQRQAVPLLKPQAPIVGTGIEFKAAVDSGVLPKAKNAGVVTFVSANEIRVKRDSDGGTDNYRLLKFKRSNQSSCINQRPIVNKGEIVFKNQVLADGPSTDLGEIALGKNIRMGFITWEGYNYEDAMLISEELVREDVFTSMHIEEYECEARDTKLGPEEITRDIPNVSEDALKDIDDRGIIRIGAEVRSGDILVGKVTPKGETELTAEERLLRAIFGEKAREVRDTSLRVPHGEAGIIVDIKVFTRENGDELNPGVNELVRCYIVQKRKISVGDKMAGRHGNKGVISRILPEEDMPFLPDGRPLQICLNPLGVPSRMNIGQVLEVHLGWAASKLGWHISTPVFDGATENEIEACLEKAGYNANGKTVLYDGRTGEPFDNPVTVGIMYILKLAHLVDDKIHARSTGPYSLVTQQPLGGKAQFGGQRFGEMEVWALEAYGAAHTLQEILTVKSDDVVGRVKTYEAIVKGENIPEPGVPESFKVLIKELQALCLDVKVLNENHQEVSLKEYTDDEIADLEVNIEGSEESTPVVPVVESNIEEVEVEAEDGYREDLDEIEYDENFEIETLETDLELDDFNDEH</sequence>
<evidence type="ECO:0000255" key="1">
    <source>
        <dbReference type="HAMAP-Rule" id="MF_01321"/>
    </source>
</evidence>
<gene>
    <name evidence="1" type="primary">rpoB</name>
    <name type="ordered locus">CLH_0230</name>
</gene>
<proteinExistence type="inferred from homology"/>
<accession>B2UYA3</accession>
<reference key="1">
    <citation type="submission" date="2008-05" db="EMBL/GenBank/DDBJ databases">
        <title>Complete genome sequence of Clostridium botulinum E3 str. Alaska E43.</title>
        <authorList>
            <person name="Brinkac L.M."/>
            <person name="Brown J.L."/>
            <person name="Bruce D."/>
            <person name="Detter C."/>
            <person name="Munk C."/>
            <person name="Smith L.A."/>
            <person name="Smith T.J."/>
            <person name="Sutton G."/>
            <person name="Brettin T.S."/>
        </authorList>
    </citation>
    <scope>NUCLEOTIDE SEQUENCE [LARGE SCALE GENOMIC DNA]</scope>
    <source>
        <strain>Alaska E43 / Type E3</strain>
    </source>
</reference>
<dbReference type="EC" id="2.7.7.6" evidence="1"/>
<dbReference type="EMBL" id="CP001078">
    <property type="protein sequence ID" value="ACD51529.1"/>
    <property type="molecule type" value="Genomic_DNA"/>
</dbReference>
<dbReference type="RefSeq" id="WP_003373711.1">
    <property type="nucleotide sequence ID" value="NC_010723.1"/>
</dbReference>
<dbReference type="SMR" id="B2UYA3"/>
<dbReference type="KEGG" id="cbt:CLH_0230"/>
<dbReference type="HOGENOM" id="CLU_000524_4_1_9"/>
<dbReference type="GO" id="GO:0000428">
    <property type="term" value="C:DNA-directed RNA polymerase complex"/>
    <property type="evidence" value="ECO:0007669"/>
    <property type="project" value="UniProtKB-KW"/>
</dbReference>
<dbReference type="GO" id="GO:0003677">
    <property type="term" value="F:DNA binding"/>
    <property type="evidence" value="ECO:0007669"/>
    <property type="project" value="UniProtKB-UniRule"/>
</dbReference>
<dbReference type="GO" id="GO:0003899">
    <property type="term" value="F:DNA-directed RNA polymerase activity"/>
    <property type="evidence" value="ECO:0007669"/>
    <property type="project" value="UniProtKB-UniRule"/>
</dbReference>
<dbReference type="GO" id="GO:0032549">
    <property type="term" value="F:ribonucleoside binding"/>
    <property type="evidence" value="ECO:0007669"/>
    <property type="project" value="InterPro"/>
</dbReference>
<dbReference type="GO" id="GO:0006351">
    <property type="term" value="P:DNA-templated transcription"/>
    <property type="evidence" value="ECO:0007669"/>
    <property type="project" value="UniProtKB-UniRule"/>
</dbReference>
<dbReference type="CDD" id="cd00653">
    <property type="entry name" value="RNA_pol_B_RPB2"/>
    <property type="match status" value="1"/>
</dbReference>
<dbReference type="FunFam" id="3.90.1800.10:FF:000001">
    <property type="entry name" value="DNA-directed RNA polymerase subunit beta"/>
    <property type="match status" value="1"/>
</dbReference>
<dbReference type="Gene3D" id="2.40.50.100">
    <property type="match status" value="1"/>
</dbReference>
<dbReference type="Gene3D" id="2.40.50.150">
    <property type="match status" value="1"/>
</dbReference>
<dbReference type="Gene3D" id="3.90.1100.10">
    <property type="match status" value="2"/>
</dbReference>
<dbReference type="Gene3D" id="2.30.150.10">
    <property type="entry name" value="DNA-directed RNA polymerase, beta subunit, external 1 domain"/>
    <property type="match status" value="1"/>
</dbReference>
<dbReference type="Gene3D" id="2.40.270.10">
    <property type="entry name" value="DNA-directed RNA polymerase, subunit 2, domain 6"/>
    <property type="match status" value="2"/>
</dbReference>
<dbReference type="Gene3D" id="3.90.1800.10">
    <property type="entry name" value="RNA polymerase alpha subunit dimerisation domain"/>
    <property type="match status" value="1"/>
</dbReference>
<dbReference type="Gene3D" id="3.90.1110.10">
    <property type="entry name" value="RNA polymerase Rpb2, domain 2"/>
    <property type="match status" value="2"/>
</dbReference>
<dbReference type="HAMAP" id="MF_01321">
    <property type="entry name" value="RNApol_bact_RpoB"/>
    <property type="match status" value="1"/>
</dbReference>
<dbReference type="InterPro" id="IPR042107">
    <property type="entry name" value="DNA-dir_RNA_pol_bsu_ext_1_sf"/>
</dbReference>
<dbReference type="InterPro" id="IPR019462">
    <property type="entry name" value="DNA-dir_RNA_pol_bsu_external_1"/>
</dbReference>
<dbReference type="InterPro" id="IPR015712">
    <property type="entry name" value="DNA-dir_RNA_pol_su2"/>
</dbReference>
<dbReference type="InterPro" id="IPR007120">
    <property type="entry name" value="DNA-dir_RNAP_su2_dom"/>
</dbReference>
<dbReference type="InterPro" id="IPR037033">
    <property type="entry name" value="DNA-dir_RNAP_su2_hyb_sf"/>
</dbReference>
<dbReference type="InterPro" id="IPR010243">
    <property type="entry name" value="RNA_pol_bsu_bac"/>
</dbReference>
<dbReference type="InterPro" id="IPR007121">
    <property type="entry name" value="RNA_pol_bsu_CS"/>
</dbReference>
<dbReference type="InterPro" id="IPR007644">
    <property type="entry name" value="RNA_pol_bsu_protrusion"/>
</dbReference>
<dbReference type="InterPro" id="IPR007642">
    <property type="entry name" value="RNA_pol_Rpb2_2"/>
</dbReference>
<dbReference type="InterPro" id="IPR037034">
    <property type="entry name" value="RNA_pol_Rpb2_2_sf"/>
</dbReference>
<dbReference type="InterPro" id="IPR007645">
    <property type="entry name" value="RNA_pol_Rpb2_3"/>
</dbReference>
<dbReference type="InterPro" id="IPR007641">
    <property type="entry name" value="RNA_pol_Rpb2_7"/>
</dbReference>
<dbReference type="InterPro" id="IPR014724">
    <property type="entry name" value="RNA_pol_RPB2_OB-fold"/>
</dbReference>
<dbReference type="NCBIfam" id="NF001616">
    <property type="entry name" value="PRK00405.1"/>
    <property type="match status" value="1"/>
</dbReference>
<dbReference type="NCBIfam" id="TIGR02013">
    <property type="entry name" value="rpoB"/>
    <property type="match status" value="1"/>
</dbReference>
<dbReference type="PANTHER" id="PTHR20856">
    <property type="entry name" value="DNA-DIRECTED RNA POLYMERASE I SUBUNIT 2"/>
    <property type="match status" value="1"/>
</dbReference>
<dbReference type="Pfam" id="PF04563">
    <property type="entry name" value="RNA_pol_Rpb2_1"/>
    <property type="match status" value="1"/>
</dbReference>
<dbReference type="Pfam" id="PF04561">
    <property type="entry name" value="RNA_pol_Rpb2_2"/>
    <property type="match status" value="2"/>
</dbReference>
<dbReference type="Pfam" id="PF04565">
    <property type="entry name" value="RNA_pol_Rpb2_3"/>
    <property type="match status" value="1"/>
</dbReference>
<dbReference type="Pfam" id="PF10385">
    <property type="entry name" value="RNA_pol_Rpb2_45"/>
    <property type="match status" value="1"/>
</dbReference>
<dbReference type="Pfam" id="PF00562">
    <property type="entry name" value="RNA_pol_Rpb2_6"/>
    <property type="match status" value="1"/>
</dbReference>
<dbReference type="Pfam" id="PF04560">
    <property type="entry name" value="RNA_pol_Rpb2_7"/>
    <property type="match status" value="1"/>
</dbReference>
<dbReference type="SUPFAM" id="SSF64484">
    <property type="entry name" value="beta and beta-prime subunits of DNA dependent RNA-polymerase"/>
    <property type="match status" value="1"/>
</dbReference>
<dbReference type="PROSITE" id="PS01166">
    <property type="entry name" value="RNA_POL_BETA"/>
    <property type="match status" value="1"/>
</dbReference>
<organism>
    <name type="scientific">Clostridium botulinum (strain Alaska E43 / Type E3)</name>
    <dbReference type="NCBI Taxonomy" id="508767"/>
    <lineage>
        <taxon>Bacteria</taxon>
        <taxon>Bacillati</taxon>
        <taxon>Bacillota</taxon>
        <taxon>Clostridia</taxon>
        <taxon>Eubacteriales</taxon>
        <taxon>Clostridiaceae</taxon>
        <taxon>Clostridium</taxon>
    </lineage>
</organism>